<gene>
    <name evidence="1" type="primary">gpsA</name>
    <name type="ordered locus">Bcen_2239</name>
</gene>
<organism>
    <name type="scientific">Burkholderia orbicola (strain AU 1054)</name>
    <dbReference type="NCBI Taxonomy" id="331271"/>
    <lineage>
        <taxon>Bacteria</taxon>
        <taxon>Pseudomonadati</taxon>
        <taxon>Pseudomonadota</taxon>
        <taxon>Betaproteobacteria</taxon>
        <taxon>Burkholderiales</taxon>
        <taxon>Burkholderiaceae</taxon>
        <taxon>Burkholderia</taxon>
        <taxon>Burkholderia cepacia complex</taxon>
        <taxon>Burkholderia orbicola</taxon>
    </lineage>
</organism>
<feature type="chain" id="PRO_0000255288" description="Glycerol-3-phosphate dehydrogenase [NAD(P)+]">
    <location>
        <begin position="1"/>
        <end position="332"/>
    </location>
</feature>
<feature type="active site" description="Proton acceptor" evidence="1">
    <location>
        <position position="192"/>
    </location>
</feature>
<feature type="binding site" evidence="1">
    <location>
        <position position="11"/>
    </location>
    <ligand>
        <name>NADPH</name>
        <dbReference type="ChEBI" id="CHEBI:57783"/>
    </ligand>
</feature>
<feature type="binding site" evidence="1">
    <location>
        <position position="30"/>
    </location>
    <ligand>
        <name>NADPH</name>
        <dbReference type="ChEBI" id="CHEBI:57783"/>
    </ligand>
</feature>
<feature type="binding site" evidence="1">
    <location>
        <position position="108"/>
    </location>
    <ligand>
        <name>NADPH</name>
        <dbReference type="ChEBI" id="CHEBI:57783"/>
    </ligand>
</feature>
<feature type="binding site" evidence="1">
    <location>
        <position position="108"/>
    </location>
    <ligand>
        <name>sn-glycerol 3-phosphate</name>
        <dbReference type="ChEBI" id="CHEBI:57597"/>
    </ligand>
</feature>
<feature type="binding site" evidence="1">
    <location>
        <position position="137"/>
    </location>
    <ligand>
        <name>sn-glycerol 3-phosphate</name>
        <dbReference type="ChEBI" id="CHEBI:57597"/>
    </ligand>
</feature>
<feature type="binding site" evidence="1">
    <location>
        <position position="139"/>
    </location>
    <ligand>
        <name>sn-glycerol 3-phosphate</name>
        <dbReference type="ChEBI" id="CHEBI:57597"/>
    </ligand>
</feature>
<feature type="binding site" evidence="1">
    <location>
        <position position="141"/>
    </location>
    <ligand>
        <name>NADPH</name>
        <dbReference type="ChEBI" id="CHEBI:57783"/>
    </ligand>
</feature>
<feature type="binding site" evidence="1">
    <location>
        <position position="192"/>
    </location>
    <ligand>
        <name>sn-glycerol 3-phosphate</name>
        <dbReference type="ChEBI" id="CHEBI:57597"/>
    </ligand>
</feature>
<feature type="binding site" evidence="1">
    <location>
        <position position="245"/>
    </location>
    <ligand>
        <name>sn-glycerol 3-phosphate</name>
        <dbReference type="ChEBI" id="CHEBI:57597"/>
    </ligand>
</feature>
<feature type="binding site" evidence="1">
    <location>
        <position position="255"/>
    </location>
    <ligand>
        <name>sn-glycerol 3-phosphate</name>
        <dbReference type="ChEBI" id="CHEBI:57597"/>
    </ligand>
</feature>
<feature type="binding site" evidence="1">
    <location>
        <position position="256"/>
    </location>
    <ligand>
        <name>NADPH</name>
        <dbReference type="ChEBI" id="CHEBI:57783"/>
    </ligand>
</feature>
<feature type="binding site" evidence="1">
    <location>
        <position position="256"/>
    </location>
    <ligand>
        <name>sn-glycerol 3-phosphate</name>
        <dbReference type="ChEBI" id="CHEBI:57597"/>
    </ligand>
</feature>
<feature type="binding site" evidence="1">
    <location>
        <position position="257"/>
    </location>
    <ligand>
        <name>sn-glycerol 3-phosphate</name>
        <dbReference type="ChEBI" id="CHEBI:57597"/>
    </ligand>
</feature>
<feature type="binding site" evidence="1">
    <location>
        <position position="280"/>
    </location>
    <ligand>
        <name>NADPH</name>
        <dbReference type="ChEBI" id="CHEBI:57783"/>
    </ligand>
</feature>
<feature type="binding site" evidence="1">
    <location>
        <position position="282"/>
    </location>
    <ligand>
        <name>NADPH</name>
        <dbReference type="ChEBI" id="CHEBI:57783"/>
    </ligand>
</feature>
<evidence type="ECO:0000255" key="1">
    <source>
        <dbReference type="HAMAP-Rule" id="MF_00394"/>
    </source>
</evidence>
<dbReference type="EC" id="1.1.1.94" evidence="1"/>
<dbReference type="EMBL" id="CP000378">
    <property type="protein sequence ID" value="ABF77140.1"/>
    <property type="molecule type" value="Genomic_DNA"/>
</dbReference>
<dbReference type="SMR" id="Q1BTB5"/>
<dbReference type="HOGENOM" id="CLU_033449_0_2_4"/>
<dbReference type="UniPathway" id="UPA00940"/>
<dbReference type="GO" id="GO:0005829">
    <property type="term" value="C:cytosol"/>
    <property type="evidence" value="ECO:0007669"/>
    <property type="project" value="TreeGrafter"/>
</dbReference>
<dbReference type="GO" id="GO:0047952">
    <property type="term" value="F:glycerol-3-phosphate dehydrogenase [NAD(P)+] activity"/>
    <property type="evidence" value="ECO:0007669"/>
    <property type="project" value="UniProtKB-UniRule"/>
</dbReference>
<dbReference type="GO" id="GO:0051287">
    <property type="term" value="F:NAD binding"/>
    <property type="evidence" value="ECO:0007669"/>
    <property type="project" value="InterPro"/>
</dbReference>
<dbReference type="GO" id="GO:0005975">
    <property type="term" value="P:carbohydrate metabolic process"/>
    <property type="evidence" value="ECO:0007669"/>
    <property type="project" value="InterPro"/>
</dbReference>
<dbReference type="GO" id="GO:0046167">
    <property type="term" value="P:glycerol-3-phosphate biosynthetic process"/>
    <property type="evidence" value="ECO:0007669"/>
    <property type="project" value="UniProtKB-UniRule"/>
</dbReference>
<dbReference type="GO" id="GO:0046168">
    <property type="term" value="P:glycerol-3-phosphate catabolic process"/>
    <property type="evidence" value="ECO:0007669"/>
    <property type="project" value="InterPro"/>
</dbReference>
<dbReference type="GO" id="GO:0006650">
    <property type="term" value="P:glycerophospholipid metabolic process"/>
    <property type="evidence" value="ECO:0007669"/>
    <property type="project" value="UniProtKB-UniRule"/>
</dbReference>
<dbReference type="GO" id="GO:0008654">
    <property type="term" value="P:phospholipid biosynthetic process"/>
    <property type="evidence" value="ECO:0007669"/>
    <property type="project" value="UniProtKB-KW"/>
</dbReference>
<dbReference type="FunFam" id="1.10.1040.10:FF:000001">
    <property type="entry name" value="Glycerol-3-phosphate dehydrogenase [NAD(P)+]"/>
    <property type="match status" value="1"/>
</dbReference>
<dbReference type="FunFam" id="3.40.50.720:FF:000019">
    <property type="entry name" value="Glycerol-3-phosphate dehydrogenase [NAD(P)+]"/>
    <property type="match status" value="1"/>
</dbReference>
<dbReference type="Gene3D" id="1.10.1040.10">
    <property type="entry name" value="N-(1-d-carboxylethyl)-l-norvaline Dehydrogenase, domain 2"/>
    <property type="match status" value="1"/>
</dbReference>
<dbReference type="Gene3D" id="3.40.50.720">
    <property type="entry name" value="NAD(P)-binding Rossmann-like Domain"/>
    <property type="match status" value="1"/>
</dbReference>
<dbReference type="HAMAP" id="MF_00394">
    <property type="entry name" value="NAD_Glyc3P_dehydrog"/>
    <property type="match status" value="1"/>
</dbReference>
<dbReference type="InterPro" id="IPR008927">
    <property type="entry name" value="6-PGluconate_DH-like_C_sf"/>
</dbReference>
<dbReference type="InterPro" id="IPR013328">
    <property type="entry name" value="6PGD_dom2"/>
</dbReference>
<dbReference type="InterPro" id="IPR006168">
    <property type="entry name" value="G3P_DH_NAD-dep"/>
</dbReference>
<dbReference type="InterPro" id="IPR006109">
    <property type="entry name" value="G3P_DH_NAD-dep_C"/>
</dbReference>
<dbReference type="InterPro" id="IPR011128">
    <property type="entry name" value="G3P_DH_NAD-dep_N"/>
</dbReference>
<dbReference type="InterPro" id="IPR036291">
    <property type="entry name" value="NAD(P)-bd_dom_sf"/>
</dbReference>
<dbReference type="NCBIfam" id="NF000940">
    <property type="entry name" value="PRK00094.1-2"/>
    <property type="match status" value="1"/>
</dbReference>
<dbReference type="NCBIfam" id="NF000942">
    <property type="entry name" value="PRK00094.1-4"/>
    <property type="match status" value="1"/>
</dbReference>
<dbReference type="PANTHER" id="PTHR11728">
    <property type="entry name" value="GLYCEROL-3-PHOSPHATE DEHYDROGENASE"/>
    <property type="match status" value="1"/>
</dbReference>
<dbReference type="PANTHER" id="PTHR11728:SF1">
    <property type="entry name" value="GLYCEROL-3-PHOSPHATE DEHYDROGENASE [NAD(+)] 2, CHLOROPLASTIC"/>
    <property type="match status" value="1"/>
</dbReference>
<dbReference type="Pfam" id="PF07479">
    <property type="entry name" value="NAD_Gly3P_dh_C"/>
    <property type="match status" value="1"/>
</dbReference>
<dbReference type="Pfam" id="PF01210">
    <property type="entry name" value="NAD_Gly3P_dh_N"/>
    <property type="match status" value="1"/>
</dbReference>
<dbReference type="PIRSF" id="PIRSF000114">
    <property type="entry name" value="Glycerol-3-P_dh"/>
    <property type="match status" value="1"/>
</dbReference>
<dbReference type="PRINTS" id="PR00077">
    <property type="entry name" value="GPDHDRGNASE"/>
</dbReference>
<dbReference type="SUPFAM" id="SSF48179">
    <property type="entry name" value="6-phosphogluconate dehydrogenase C-terminal domain-like"/>
    <property type="match status" value="1"/>
</dbReference>
<dbReference type="SUPFAM" id="SSF51735">
    <property type="entry name" value="NAD(P)-binding Rossmann-fold domains"/>
    <property type="match status" value="1"/>
</dbReference>
<dbReference type="PROSITE" id="PS00957">
    <property type="entry name" value="NAD_G3PDH"/>
    <property type="match status" value="1"/>
</dbReference>
<name>GPDA_BURO1</name>
<protein>
    <recommendedName>
        <fullName evidence="1">Glycerol-3-phosphate dehydrogenase [NAD(P)+]</fullName>
        <ecNumber evidence="1">1.1.1.94</ecNumber>
    </recommendedName>
    <alternativeName>
        <fullName evidence="1">NAD(P)(+)-dependent glycerol-3-phosphate dehydrogenase</fullName>
    </alternativeName>
    <alternativeName>
        <fullName evidence="1">NAD(P)H-dependent dihydroxyacetone-phosphate reductase</fullName>
    </alternativeName>
</protein>
<proteinExistence type="inferred from homology"/>
<sequence>MKVAVLGAGAWGTALAGHLAARHDTLLWARDAALIAGLQARHENSRYLDGIALPDALRYDADLGAALAHGAADDALCVIAAPVAGLRTLCHAMRDAGCVPAHVVWVCKGFEADTHLLPHQVIAAELPEQQSNGVLSGPSFAREVGQSLPVALTVASVSAECRERTLAAFHHGAMRIYTGDDVVGVEVGGAVKNVLAIATGISDGLGLGLNARAALITRGLAEMSRLGVVLGGRAETFTGLTGLGDLILTATGDLSRNRTVGLQLAAGRTLNDILGALGHVAEGVRCAQAVLALARAQSIDMPITQAVCGVLFDGIAPRDAVSGLLRRDARAE</sequence>
<accession>Q1BTB5</accession>
<keyword id="KW-0963">Cytoplasm</keyword>
<keyword id="KW-0444">Lipid biosynthesis</keyword>
<keyword id="KW-0443">Lipid metabolism</keyword>
<keyword id="KW-0520">NAD</keyword>
<keyword id="KW-0521">NADP</keyword>
<keyword id="KW-0547">Nucleotide-binding</keyword>
<keyword id="KW-0560">Oxidoreductase</keyword>
<keyword id="KW-0594">Phospholipid biosynthesis</keyword>
<keyword id="KW-1208">Phospholipid metabolism</keyword>
<reference key="1">
    <citation type="submission" date="2006-05" db="EMBL/GenBank/DDBJ databases">
        <title>Complete sequence of chromosome 1 of Burkholderia cenocepacia AU 1054.</title>
        <authorList>
            <consortium name="US DOE Joint Genome Institute"/>
            <person name="Copeland A."/>
            <person name="Lucas S."/>
            <person name="Lapidus A."/>
            <person name="Barry K."/>
            <person name="Detter J.C."/>
            <person name="Glavina del Rio T."/>
            <person name="Hammon N."/>
            <person name="Israni S."/>
            <person name="Dalin E."/>
            <person name="Tice H."/>
            <person name="Pitluck S."/>
            <person name="Chain P."/>
            <person name="Malfatti S."/>
            <person name="Shin M."/>
            <person name="Vergez L."/>
            <person name="Schmutz J."/>
            <person name="Larimer F."/>
            <person name="Land M."/>
            <person name="Hauser L."/>
            <person name="Kyrpides N."/>
            <person name="Lykidis A."/>
            <person name="LiPuma J.J."/>
            <person name="Konstantinidis K."/>
            <person name="Tiedje J.M."/>
            <person name="Richardson P."/>
        </authorList>
    </citation>
    <scope>NUCLEOTIDE SEQUENCE [LARGE SCALE GENOMIC DNA]</scope>
    <source>
        <strain>AU 1054</strain>
    </source>
</reference>
<comment type="function">
    <text evidence="1">Catalyzes the reduction of the glycolytic intermediate dihydroxyacetone phosphate (DHAP) to sn-glycerol 3-phosphate (G3P), the key precursor for phospholipid synthesis.</text>
</comment>
<comment type="catalytic activity">
    <reaction evidence="1">
        <text>sn-glycerol 3-phosphate + NAD(+) = dihydroxyacetone phosphate + NADH + H(+)</text>
        <dbReference type="Rhea" id="RHEA:11092"/>
        <dbReference type="ChEBI" id="CHEBI:15378"/>
        <dbReference type="ChEBI" id="CHEBI:57540"/>
        <dbReference type="ChEBI" id="CHEBI:57597"/>
        <dbReference type="ChEBI" id="CHEBI:57642"/>
        <dbReference type="ChEBI" id="CHEBI:57945"/>
        <dbReference type="EC" id="1.1.1.94"/>
    </reaction>
    <physiologicalReaction direction="right-to-left" evidence="1">
        <dbReference type="Rhea" id="RHEA:11094"/>
    </physiologicalReaction>
</comment>
<comment type="catalytic activity">
    <reaction evidence="1">
        <text>sn-glycerol 3-phosphate + NADP(+) = dihydroxyacetone phosphate + NADPH + H(+)</text>
        <dbReference type="Rhea" id="RHEA:11096"/>
        <dbReference type="ChEBI" id="CHEBI:15378"/>
        <dbReference type="ChEBI" id="CHEBI:57597"/>
        <dbReference type="ChEBI" id="CHEBI:57642"/>
        <dbReference type="ChEBI" id="CHEBI:57783"/>
        <dbReference type="ChEBI" id="CHEBI:58349"/>
        <dbReference type="EC" id="1.1.1.94"/>
    </reaction>
    <physiologicalReaction direction="right-to-left" evidence="1">
        <dbReference type="Rhea" id="RHEA:11098"/>
    </physiologicalReaction>
</comment>
<comment type="pathway">
    <text evidence="1">Membrane lipid metabolism; glycerophospholipid metabolism.</text>
</comment>
<comment type="subcellular location">
    <subcellularLocation>
        <location evidence="1">Cytoplasm</location>
    </subcellularLocation>
</comment>
<comment type="similarity">
    <text evidence="1">Belongs to the NAD-dependent glycerol-3-phosphate dehydrogenase family.</text>
</comment>